<dbReference type="EC" id="1.4.3.1" evidence="5 6 7 8 9 10"/>
<dbReference type="EMBL" id="X95310">
    <property type="protein sequence ID" value="CAA64622.1"/>
    <property type="molecule type" value="mRNA"/>
</dbReference>
<dbReference type="PIR" id="A44132">
    <property type="entry name" value="A44132"/>
</dbReference>
<dbReference type="RefSeq" id="NP_776333.1">
    <property type="nucleotide sequence ID" value="NM_173908.2"/>
</dbReference>
<dbReference type="SMR" id="P31228"/>
<dbReference type="FunCoup" id="P31228">
    <property type="interactions" value="467"/>
</dbReference>
<dbReference type="STRING" id="9913.ENSBTAP00000013892"/>
<dbReference type="BindingDB" id="P31228"/>
<dbReference type="ChEMBL" id="CHEMBL1795183"/>
<dbReference type="PaxDb" id="9913-ENSBTAP00000013892"/>
<dbReference type="Ensembl" id="ENSBTAT00000080645.2">
    <property type="protein sequence ID" value="ENSBTAP00000072638.1"/>
    <property type="gene ID" value="ENSBTAG00000033367.5"/>
</dbReference>
<dbReference type="GeneID" id="280763"/>
<dbReference type="KEGG" id="bta:280763"/>
<dbReference type="CTD" id="8528"/>
<dbReference type="VEuPathDB" id="HostDB:ENSBTAG00000033367"/>
<dbReference type="VGNC" id="VGNC:27951">
    <property type="gene designation" value="DDO"/>
</dbReference>
<dbReference type="eggNOG" id="KOG3923">
    <property type="taxonomic scope" value="Eukaryota"/>
</dbReference>
<dbReference type="GeneTree" id="ENSGT00390000018635"/>
<dbReference type="HOGENOM" id="CLU_034311_0_2_1"/>
<dbReference type="InParanoid" id="P31228"/>
<dbReference type="OMA" id="DLWELQP"/>
<dbReference type="OrthoDB" id="2015447at2759"/>
<dbReference type="TreeFam" id="TF313887"/>
<dbReference type="Reactome" id="R-BTA-389661">
    <property type="pathway name" value="Glyoxylate metabolism and glycine degradation"/>
</dbReference>
<dbReference type="Reactome" id="R-BTA-9033241">
    <property type="pathway name" value="Peroxisomal protein import"/>
</dbReference>
<dbReference type="PRO" id="PR:P31228"/>
<dbReference type="Proteomes" id="UP000009136">
    <property type="component" value="Chromosome 9"/>
</dbReference>
<dbReference type="Bgee" id="ENSBTAG00000033367">
    <property type="expression patterns" value="Expressed in pons and 94 other cell types or tissues"/>
</dbReference>
<dbReference type="GO" id="GO:0005737">
    <property type="term" value="C:cytoplasm"/>
    <property type="evidence" value="ECO:0000318"/>
    <property type="project" value="GO_Central"/>
</dbReference>
<dbReference type="GO" id="GO:0005829">
    <property type="term" value="C:cytosol"/>
    <property type="evidence" value="ECO:0007669"/>
    <property type="project" value="UniProtKB-SubCell"/>
</dbReference>
<dbReference type="GO" id="GO:0005782">
    <property type="term" value="C:peroxisomal matrix"/>
    <property type="evidence" value="ECO:0000314"/>
    <property type="project" value="UniProtKB"/>
</dbReference>
<dbReference type="GO" id="GO:0008445">
    <property type="term" value="F:D-aspartate oxidase activity"/>
    <property type="evidence" value="ECO:0000314"/>
    <property type="project" value="UniProtKB"/>
</dbReference>
<dbReference type="GO" id="GO:0047821">
    <property type="term" value="F:D-glutamate oxidase activity"/>
    <property type="evidence" value="ECO:0007669"/>
    <property type="project" value="RHEA"/>
</dbReference>
<dbReference type="GO" id="GO:0071949">
    <property type="term" value="F:FAD binding"/>
    <property type="evidence" value="ECO:0000314"/>
    <property type="project" value="UniProtKB"/>
</dbReference>
<dbReference type="GO" id="GO:0019478">
    <property type="term" value="P:D-amino acid catabolic process"/>
    <property type="evidence" value="ECO:0000314"/>
    <property type="project" value="UniProtKB"/>
</dbReference>
<dbReference type="GO" id="GO:0050877">
    <property type="term" value="P:nervous system process"/>
    <property type="evidence" value="ECO:0000250"/>
    <property type="project" value="UniProtKB"/>
</dbReference>
<dbReference type="FunFam" id="3.30.9.10:FF:000004">
    <property type="entry name" value="D-amino-acid oxidase"/>
    <property type="match status" value="1"/>
</dbReference>
<dbReference type="FunFam" id="3.40.50.720:FF:000551">
    <property type="entry name" value="D-aspartate oxidase"/>
    <property type="match status" value="1"/>
</dbReference>
<dbReference type="Gene3D" id="3.30.9.10">
    <property type="entry name" value="D-Amino Acid Oxidase, subunit A, domain 2"/>
    <property type="match status" value="1"/>
</dbReference>
<dbReference type="Gene3D" id="3.40.50.720">
    <property type="entry name" value="NAD(P)-binding Rossmann-like Domain"/>
    <property type="match status" value="1"/>
</dbReference>
<dbReference type="InterPro" id="IPR006181">
    <property type="entry name" value="D-amino_acid_oxidase_CS"/>
</dbReference>
<dbReference type="InterPro" id="IPR023209">
    <property type="entry name" value="DAO"/>
</dbReference>
<dbReference type="InterPro" id="IPR006076">
    <property type="entry name" value="FAD-dep_OxRdtase"/>
</dbReference>
<dbReference type="PANTHER" id="PTHR11530">
    <property type="entry name" value="D-AMINO ACID OXIDASE"/>
    <property type="match status" value="1"/>
</dbReference>
<dbReference type="PANTHER" id="PTHR11530:SF11">
    <property type="entry name" value="D-ASPARTATE OXIDASE"/>
    <property type="match status" value="1"/>
</dbReference>
<dbReference type="Pfam" id="PF01266">
    <property type="entry name" value="DAO"/>
    <property type="match status" value="1"/>
</dbReference>
<dbReference type="PIRSF" id="PIRSF000189">
    <property type="entry name" value="D-aa_oxidase"/>
    <property type="match status" value="1"/>
</dbReference>
<dbReference type="SUPFAM" id="SSF54373">
    <property type="entry name" value="FAD-linked reductases, C-terminal domain"/>
    <property type="match status" value="1"/>
</dbReference>
<dbReference type="SUPFAM" id="SSF51971">
    <property type="entry name" value="Nucleotide-binding domain"/>
    <property type="match status" value="1"/>
</dbReference>
<dbReference type="PROSITE" id="PS00677">
    <property type="entry name" value="DAO"/>
    <property type="match status" value="1"/>
</dbReference>
<protein>
    <recommendedName>
        <fullName>D-aspartate oxidase</fullName>
        <shortName>DASOX</shortName>
        <shortName evidence="3">DASPO</shortName>
        <shortName>DDO</shortName>
        <ecNumber evidence="5 6 7 8 9 10">1.4.3.1</ecNumber>
    </recommendedName>
</protein>
<keyword id="KW-0963">Cytoplasm</keyword>
<keyword id="KW-0903">Direct protein sequencing</keyword>
<keyword id="KW-0274">FAD</keyword>
<keyword id="KW-0285">Flavoprotein</keyword>
<keyword id="KW-0560">Oxidoreductase</keyword>
<keyword id="KW-0576">Peroxisome</keyword>
<keyword id="KW-1185">Reference proteome</keyword>
<gene>
    <name type="primary">DDO</name>
</gene>
<comment type="function">
    <text evidence="1 2 5 6 7 8 9 10">Selectively catalyzes the oxidative deamination of acidic amino acids (PubMed:10209293, PubMed:1555574, PubMed:2901415, PubMed:3611051, PubMed:7915543, PubMed:8773567). Suppresses the level of D-aspartate in the brain, an amino acid that can act as an agonist for glutamate receptors (By similarity). Protects the organism from the toxicity of D-amino acids (By similarity). May also function in the intestine (By similarity).</text>
</comment>
<comment type="catalytic activity">
    <reaction evidence="5 6 7 8 9 10">
        <text>D-aspartate + O2 + H2O = oxaloacetate + H2O2 + NH4(+)</text>
        <dbReference type="Rhea" id="RHEA:12512"/>
        <dbReference type="ChEBI" id="CHEBI:15377"/>
        <dbReference type="ChEBI" id="CHEBI:15379"/>
        <dbReference type="ChEBI" id="CHEBI:16240"/>
        <dbReference type="ChEBI" id="CHEBI:16452"/>
        <dbReference type="ChEBI" id="CHEBI:28938"/>
        <dbReference type="ChEBI" id="CHEBI:29990"/>
        <dbReference type="EC" id="1.4.3.1"/>
    </reaction>
    <physiologicalReaction direction="left-to-right" evidence="5 6 7 8 9 10">
        <dbReference type="Rhea" id="RHEA:12513"/>
    </physiologicalReaction>
</comment>
<comment type="catalytic activity">
    <reaction evidence="5 6">
        <text>D-glutamate + O2 + H2O = H2O2 + 2-oxoglutarate + NH4(+)</text>
        <dbReference type="Rhea" id="RHEA:10028"/>
        <dbReference type="ChEBI" id="CHEBI:15377"/>
        <dbReference type="ChEBI" id="CHEBI:15379"/>
        <dbReference type="ChEBI" id="CHEBI:16240"/>
        <dbReference type="ChEBI" id="CHEBI:16810"/>
        <dbReference type="ChEBI" id="CHEBI:28938"/>
        <dbReference type="ChEBI" id="CHEBI:29986"/>
    </reaction>
    <physiologicalReaction direction="left-to-right" evidence="5 6">
        <dbReference type="Rhea" id="RHEA:10029"/>
    </physiologicalReaction>
</comment>
<comment type="cofactor">
    <cofactor evidence="5 8">
        <name>FAD</name>
        <dbReference type="ChEBI" id="CHEBI:57692"/>
    </cofactor>
</comment>
<comment type="activity regulation">
    <text evidence="6">Inhibited by phenylglyoxal; chemical modification of arginine residues in the enzyme with phenylglyoxal leads to the irreversible loss of activity towards dicarboxylic D-amino acids, paralleled by a transient appearance of activity versus monocarboxylic ones.</text>
</comment>
<comment type="biophysicochemical properties">
    <kinetics>
        <KM evidence="9">2.7 mM for D-aspartate (at 25 degrees Celsius and at pH 7)</KM>
        <KM evidence="7">2.2 mM for D-aspartate (at 4 degrees Celsius and at pH 7.4)</KM>
        <KM evidence="7">1.6 mM for D-aspartate (at 25 degrees Celsius and at pH 7.4)</KM>
        <KM evidence="5">3.7 mM for D-aspartate (at 25 degrees Celsius and at pH 7.4)</KM>
        <KM evidence="9">8.8 mM for D-glutamate (at 25 degrees Celsius and at pH 7)</KM>
        <KM evidence="5">5.6 mM for D-glutamate (at 25 degrees Celsius and at pH 7.4)</KM>
        <KM evidence="9">0.2 mM for N-methyl D-aspartate (at 25 degrees Celsius and at pH 7)</KM>
        <KM evidence="5">1.5 mM for N-methyl D-aspartate (at 25 degrees Celsius and at pH 7.4)</KM>
        <KM evidence="9">0.9 mM for D-proline (at 25 degrees Celsius and at pH 7)</KM>
        <KM evidence="5">1.7 mM for D,L-cysteic acid (at 25 degrees Celsius and at pH 7.4)</KM>
        <KM evidence="5">9.8 mM for D-homocysteic acid (at 25 degrees Celsius and at pH 7.4)</KM>
        <KM evidence="5">15.2 mM for D,L-2-amino-3-phosphonopropanoic acid (at 25 degrees Celsius and at pH 7.4)</KM>
        <KM evidence="5">16.2 mM for D-alpha-aminoadipic acid (at 25 degrees Celsius and at pH 7.4)</KM>
        <KM evidence="5">3 mM for D-aspartic acid-beta-hydroxamate (at 25 degrees Celsius and at pH 7.4)</KM>
        <KM evidence="5">143 mM for glycyl-D-aspartic acid (at 25 degrees Celsius and at pH 7.4)</KM>
        <KM evidence="5">4.5 mM for cis-2,3-piperidine dicarboxylic acid (at 25 degrees Celsius and at pH 7.4)</KM>
        <text evidence="5 7 9">kcat is 4.7 sec(-1) with D-aspartate as substrate (at 25 degrees Celsius and at pH 7) (PubMed:7915543). kcat is 11.1 sec(-1) with D-aspartate as substrate (at 4 degrees Celsius and at pH 7.4) (PubMed:2901415). kcat is 43.5 sec(-1) with D-aspartate as substrate (at 25 degrees Celsius and at pH 7.4) (PubMed:2901415). kcat is 22.5 sec(-1) with D-aspartate as substrate (at 25 degrees Celsius and at pH 7.4) (PubMed:10209293). kcat is 2.2 sec(-1) with D-glutamate as substrate (at 25 degrees Celsius and at pH 7) (PubMed:7915543). kcat is 1.19 sec(-1) with D-glutamate as substrate (at 25 degrees Celsius and at pH 7.4) (PubMed:10209293). kcat is 16.3 sec(-1) with N-methyl D-aspartate as substrate (at 25 degrees Celsius and at pH 7) (PubMed:7915543). kcat is 30.9 sec(-1) with N-methyl D-aspartate as substrate (at 25 degrees Celsius and at pH 7.4) (PubMed:10209293). kcat is 0.4 sec(-1) with D-proline as substrate (at 25 degrees Celsius and at pH 7) (PubMed:7915543). kcat is 0.66 sec(-1) with D,L-cysteic acid as substrate (at 25 degrees Celsius and at pH 7.4) (PubMed:10209293). kcat is 0.33 sec(-1) with D-homocysteic acid as substrate (at 25 degrees Celsius and at pH 7.4) (PubMed:10209293). kcat is 0.20 sec(-1) with D,L-2-amino-3-phosphonopropanoic acid as substrate (at 25 degrees Celsius and at pH 7.4) (PubMed:10209293). kcat is 0.22 sec(-1) with D-alpha-aminoadipic acid as substrate (at 25 degrees Celsius and at pH 7.4) (PubMed:10209293). kcat is 0.21 sec(-1) with D-aspartic acid-beta-hydroxamate as substrate (at 25 degrees Celsius and at pH 7.4) (PubMed:10209293). kcat is 0.28 sec(-1) with glycyl-D-aspartic acid as substrate (at 25 degrees Celsius and at pH 7.4) (PubMed:10209293). kcat is 2 sec(-1) with cis-2,3-piperidine dicarboxylic acid as substrate (at 25 degrees Celsius and at pH 7.4) (PubMed:10209293).</text>
    </kinetics>
</comment>
<comment type="subunit">
    <text evidence="3 8">Monomer (PubMed:3611051). Interacts with PEX5; the interaction is direct and required for localization of DDO to the peroxisome (By similarity).</text>
</comment>
<comment type="subcellular location">
    <subcellularLocation>
        <location evidence="10">Peroxisome matrix</location>
    </subcellularLocation>
    <subcellularLocation>
        <location evidence="3">Cytoplasm</location>
        <location evidence="3">Cytosol</location>
    </subcellularLocation>
    <text evidence="3">Active in the peroxisomal matrix.</text>
</comment>
<comment type="tissue specificity">
    <text evidence="10">In the kidney, expressed in epithelial cells of the proximal tubules and in the liver (at protein level).</text>
</comment>
<comment type="miscellaneous">
    <text evidence="5 8">The enzyme is inactive in complex with 6-hydroxy-flavin adenine dinucleotide (6-OH-FAD); the complex is not physiologically relevant but an artifact of purification procedures.</text>
</comment>
<comment type="similarity">
    <text evidence="11">Belongs to the DAMOX/DASOX family.</text>
</comment>
<accession>P31228</accession>
<accession>F1MP99</accession>
<accession>O02846</accession>
<accession>Q9TRA3</accession>
<evidence type="ECO:0000250" key="1">
    <source>
        <dbReference type="UniProtKB" id="D3ZDM7"/>
    </source>
</evidence>
<evidence type="ECO:0000250" key="2">
    <source>
        <dbReference type="UniProtKB" id="Q922Z0"/>
    </source>
</evidence>
<evidence type="ECO:0000250" key="3">
    <source>
        <dbReference type="UniProtKB" id="Q99489"/>
    </source>
</evidence>
<evidence type="ECO:0000255" key="4"/>
<evidence type="ECO:0000269" key="5">
    <source>
    </source>
</evidence>
<evidence type="ECO:0000269" key="6">
    <source>
    </source>
</evidence>
<evidence type="ECO:0000269" key="7">
    <source>
    </source>
</evidence>
<evidence type="ECO:0000269" key="8">
    <source>
    </source>
</evidence>
<evidence type="ECO:0000269" key="9">
    <source>
    </source>
</evidence>
<evidence type="ECO:0000269" key="10">
    <source>
    </source>
</evidence>
<evidence type="ECO:0000305" key="11"/>
<evidence type="ECO:0000312" key="12">
    <source>
        <dbReference type="EMBL" id="CAA64622.1"/>
    </source>
</evidence>
<organism>
    <name type="scientific">Bos taurus</name>
    <name type="common">Bovine</name>
    <dbReference type="NCBI Taxonomy" id="9913"/>
    <lineage>
        <taxon>Eukaryota</taxon>
        <taxon>Metazoa</taxon>
        <taxon>Chordata</taxon>
        <taxon>Craniata</taxon>
        <taxon>Vertebrata</taxon>
        <taxon>Euteleostomi</taxon>
        <taxon>Mammalia</taxon>
        <taxon>Eutheria</taxon>
        <taxon>Laurasiatheria</taxon>
        <taxon>Artiodactyla</taxon>
        <taxon>Ruminantia</taxon>
        <taxon>Pecora</taxon>
        <taxon>Bovidae</taxon>
        <taxon>Bovinae</taxon>
        <taxon>Bos</taxon>
    </lineage>
</organism>
<feature type="chain" id="PRO_0000162769" description="D-aspartate oxidase">
    <location>
        <begin position="1"/>
        <end position="341"/>
    </location>
</feature>
<feature type="short sequence motif" description="Microbody targeting signal" evidence="4">
    <location>
        <begin position="339"/>
        <end position="341"/>
    </location>
</feature>
<feature type="binding site" evidence="3">
    <location>
        <position position="36"/>
    </location>
    <ligand>
        <name>FAD</name>
        <dbReference type="ChEBI" id="CHEBI:57692"/>
    </ligand>
</feature>
<feature type="binding site" evidence="3">
    <location>
        <position position="37"/>
    </location>
    <ligand>
        <name>FAD</name>
        <dbReference type="ChEBI" id="CHEBI:57692"/>
    </ligand>
</feature>
<feature type="binding site" evidence="3">
    <location>
        <position position="43"/>
    </location>
    <ligand>
        <name>FAD</name>
        <dbReference type="ChEBI" id="CHEBI:57692"/>
    </ligand>
</feature>
<feature type="binding site" evidence="3">
    <location>
        <position position="44"/>
    </location>
    <ligand>
        <name>FAD</name>
        <dbReference type="ChEBI" id="CHEBI:57692"/>
    </ligand>
</feature>
<feature type="binding site" evidence="3">
    <location>
        <position position="50"/>
    </location>
    <ligand>
        <name>FAD</name>
        <dbReference type="ChEBI" id="CHEBI:57692"/>
    </ligand>
</feature>
<feature type="binding site" evidence="3">
    <location>
        <position position="307"/>
    </location>
    <ligand>
        <name>FAD</name>
        <dbReference type="ChEBI" id="CHEBI:57692"/>
    </ligand>
</feature>
<feature type="binding site" evidence="3">
    <location>
        <position position="311"/>
    </location>
    <ligand>
        <name>FAD</name>
        <dbReference type="ChEBI" id="CHEBI:57692"/>
    </ligand>
</feature>
<feature type="modified residue" description="Blocked amino end (Met)">
    <location>
        <position position="1"/>
    </location>
</feature>
<feature type="sequence conflict" description="In Ref. 1; CAA64622." evidence="11" ref="1">
    <original>I</original>
    <variation>V</variation>
    <location>
        <position position="228"/>
    </location>
</feature>
<feature type="sequence conflict" description="In Ref. 2; AA sequence." evidence="11" ref="2">
    <original>K</original>
    <variation>R</variation>
    <location>
        <position position="274"/>
    </location>
</feature>
<feature type="sequence conflict" description="In Ref. 1; CAA64622." evidence="11" ref="1">
    <original>G</original>
    <variation>S</variation>
    <location>
        <position position="283"/>
    </location>
</feature>
<proteinExistence type="evidence at protein level"/>
<name>OXDD_BOVIN</name>
<reference evidence="12" key="1">
    <citation type="journal article" date="1997" name="Biochem. J.">
        <title>cDNA cloning and expression of the flavoprotein D-aspartate oxidase from bovine kidney cortex.</title>
        <authorList>
            <person name="Simonic T."/>
            <person name="Duga S."/>
            <person name="Negri A."/>
            <person name="Tedeschi G."/>
            <person name="Malcovati M."/>
            <person name="Tenchini M.L."/>
            <person name="Ronchi S."/>
        </authorList>
    </citation>
    <scope>NUCLEOTIDE SEQUENCE [MRNA]</scope>
    <source>
        <tissue>Kidney cortex</tissue>
    </source>
</reference>
<reference key="2">
    <citation type="journal article" date="1992" name="J. Biol. Chem.">
        <title>The primary structure of the flavoprotein D-aspartate oxidase from beef kidney.</title>
        <authorList>
            <person name="Negri A."/>
            <person name="Ceciliani F."/>
            <person name="Tedeschi G."/>
            <person name="Simonic T."/>
            <person name="Ronchi S."/>
        </authorList>
    </citation>
    <scope>PROTEIN SEQUENCE OF 1-338</scope>
    <source>
        <tissue>Kidney</tissue>
    </source>
</reference>
<reference key="3">
    <citation type="journal article" date="1987" name="J. Biol. Chem.">
        <title>D-aspartate oxidase from beef kidney. Purification and properties.</title>
        <authorList>
            <person name="Negri A."/>
            <person name="Massey V."/>
            <person name="Williams C.H. Jr."/>
        </authorList>
    </citation>
    <scope>FUNCTION</scope>
    <scope>CATALYTIC ACTIVITY</scope>
    <scope>COFACTOR</scope>
    <scope>SUBUNIT</scope>
</reference>
<reference key="4">
    <citation type="journal article" date="1988" name="J. Biol. Chem.">
        <title>The kinetic mechanism of beef kidney D-aspartate oxidase.</title>
        <authorList>
            <person name="Negri A."/>
            <person name="Massey V."/>
            <person name="Williams C.H. Jr."/>
            <person name="Schopfer L.M."/>
        </authorList>
    </citation>
    <scope>FUNCTION</scope>
    <scope>CATALYTIC ACTIVITY</scope>
    <scope>BIOPHYSICOCHEMICAL PROPERTIES</scope>
</reference>
<reference key="5">
    <citation type="journal article" date="1992" name="Eur. J. Biochem.">
        <title>Chemical modification of functional arginyl residues in beef kidney D-aspartate oxidase.</title>
        <authorList>
            <person name="Tedeschi G."/>
            <person name="Negri A."/>
            <person name="Ceciliani F."/>
            <person name="Biondi P.A."/>
            <person name="Secchi C."/>
            <person name="Ronchi S."/>
        </authorList>
    </citation>
    <scope>FUNCTION</scope>
    <scope>CATALYTIC ACTIVITY</scope>
    <scope>ACTIVITY REGULATION</scope>
</reference>
<reference key="6">
    <citation type="journal article" date="1994" name="Biochim. Biophys. Acta">
        <title>Properties of the flavoenzyme D-aspartate oxidase from Octopus vulgaris.</title>
        <authorList>
            <person name="Tedeschi G."/>
            <person name="Negri A."/>
            <person name="Ceciliani F."/>
            <person name="Ronchi S."/>
            <person name="Vetere A."/>
            <person name="D'Aniello G."/>
            <person name="D'Aniello A."/>
        </authorList>
    </citation>
    <scope>FUNCTION</scope>
    <scope>CATALYTIC ACTIVITY</scope>
    <scope>BIOPHYSICOCHEMICAL PROPERTIES</scope>
</reference>
<reference key="7">
    <citation type="journal article" date="1996" name="J. Histochem. Cytochem.">
        <title>Light and electron microscopic localization of D-aspartate oxidase in peroxisomes of bovine kidney and liver: an immunocytochemical study.</title>
        <authorList>
            <person name="Zaar K."/>
        </authorList>
    </citation>
    <scope>FUNCTION</scope>
    <scope>CATALYTIC ACTIVITY</scope>
    <scope>SUBCELLULAR LOCATION</scope>
    <scope>TISSUE SPECIFICITY</scope>
</reference>
<reference key="8">
    <citation type="journal article" date="1999" name="Biochim. Biophys. Acta">
        <title>Purification of beef kidney D-aspartate oxidase overexpressed in Escherichia coli and characterization of its redox potentials and oxidative activity towards agonists and antagonists of excitatory amino acid receptors.</title>
        <authorList>
            <person name="Negri A."/>
            <person name="Tedeschi G."/>
            <person name="Ceciliani F."/>
            <person name="Ronchi S."/>
        </authorList>
    </citation>
    <scope>FUNCTION</scope>
    <scope>CATALYTIC ACTIVITY</scope>
    <scope>COFACTOR</scope>
    <scope>BIOPHYSICOCHEMICAL PROPERTIES</scope>
</reference>
<sequence>MDTVRIAVVGAGVMGLSTAVCISKMVPGCSITVISDKFTPETTSDVAAGMLIPPTYPDTPIQKQKQWFKETFDHLFAIVNSAEAEDAGVILVSGWQIFQSIPTEEVPYWADVVLGFRKMTKDELKKFPQHVFGHAFTTLKCEGPAYLPWLQKRVKGNGGLILTRRIEDLWELHPSFDIVVNCSGLGSRQLAGDSKIFPVRGQVLKVQAPWVKHFIRDSSGLTYIYPGISNVTLGGTRQKGDWNLSPDAEISKEILSRCCALEPSLRGAYDLREKVGLRPTRPGVRLEKELLAQDSRRLPVVHHYGHGSGGIAMHWGTALEATRLVNECVQVLRTPAPKSKL</sequence>